<proteinExistence type="inferred from homology"/>
<keyword id="KW-0066">ATP synthesis</keyword>
<keyword id="KW-1003">Cell membrane</keyword>
<keyword id="KW-0138">CF(0)</keyword>
<keyword id="KW-0375">Hydrogen ion transport</keyword>
<keyword id="KW-0406">Ion transport</keyword>
<keyword id="KW-0472">Membrane</keyword>
<keyword id="KW-0812">Transmembrane</keyword>
<keyword id="KW-1133">Transmembrane helix</keyword>
<keyword id="KW-0813">Transport</keyword>
<dbReference type="EMBL" id="CP000422">
    <property type="protein sequence ID" value="ABJ68364.1"/>
    <property type="molecule type" value="Genomic_DNA"/>
</dbReference>
<dbReference type="RefSeq" id="WP_002833681.1">
    <property type="nucleotide sequence ID" value="NC_008525.1"/>
</dbReference>
<dbReference type="SMR" id="Q03EK8"/>
<dbReference type="STRING" id="278197.PEPE_1323"/>
<dbReference type="GeneID" id="33061446"/>
<dbReference type="KEGG" id="ppe:PEPE_1323"/>
<dbReference type="eggNOG" id="COG0356">
    <property type="taxonomic scope" value="Bacteria"/>
</dbReference>
<dbReference type="HOGENOM" id="CLU_041018_2_3_9"/>
<dbReference type="OrthoDB" id="9789241at2"/>
<dbReference type="Proteomes" id="UP000000773">
    <property type="component" value="Chromosome"/>
</dbReference>
<dbReference type="GO" id="GO:0005886">
    <property type="term" value="C:plasma membrane"/>
    <property type="evidence" value="ECO:0007669"/>
    <property type="project" value="UniProtKB-SubCell"/>
</dbReference>
<dbReference type="GO" id="GO:0045259">
    <property type="term" value="C:proton-transporting ATP synthase complex"/>
    <property type="evidence" value="ECO:0007669"/>
    <property type="project" value="UniProtKB-KW"/>
</dbReference>
<dbReference type="GO" id="GO:0046933">
    <property type="term" value="F:proton-transporting ATP synthase activity, rotational mechanism"/>
    <property type="evidence" value="ECO:0007669"/>
    <property type="project" value="UniProtKB-UniRule"/>
</dbReference>
<dbReference type="GO" id="GO:0042777">
    <property type="term" value="P:proton motive force-driven plasma membrane ATP synthesis"/>
    <property type="evidence" value="ECO:0007669"/>
    <property type="project" value="TreeGrafter"/>
</dbReference>
<dbReference type="CDD" id="cd00310">
    <property type="entry name" value="ATP-synt_Fo_a_6"/>
    <property type="match status" value="1"/>
</dbReference>
<dbReference type="Gene3D" id="1.20.120.220">
    <property type="entry name" value="ATP synthase, F0 complex, subunit A"/>
    <property type="match status" value="1"/>
</dbReference>
<dbReference type="HAMAP" id="MF_01393">
    <property type="entry name" value="ATP_synth_a_bact"/>
    <property type="match status" value="1"/>
</dbReference>
<dbReference type="InterPro" id="IPR045082">
    <property type="entry name" value="ATP_syn_F0_a_bact/chloroplast"/>
</dbReference>
<dbReference type="InterPro" id="IPR000568">
    <property type="entry name" value="ATP_synth_F0_asu"/>
</dbReference>
<dbReference type="InterPro" id="IPR035908">
    <property type="entry name" value="F0_ATP_A_sf"/>
</dbReference>
<dbReference type="NCBIfam" id="TIGR01131">
    <property type="entry name" value="ATP_synt_6_or_A"/>
    <property type="match status" value="1"/>
</dbReference>
<dbReference type="NCBIfam" id="NF004479">
    <property type="entry name" value="PRK05815.1-4"/>
    <property type="match status" value="1"/>
</dbReference>
<dbReference type="PANTHER" id="PTHR42823">
    <property type="entry name" value="ATP SYNTHASE SUBUNIT A, CHLOROPLASTIC"/>
    <property type="match status" value="1"/>
</dbReference>
<dbReference type="PANTHER" id="PTHR42823:SF3">
    <property type="entry name" value="ATP SYNTHASE SUBUNIT A, CHLOROPLASTIC"/>
    <property type="match status" value="1"/>
</dbReference>
<dbReference type="Pfam" id="PF00119">
    <property type="entry name" value="ATP-synt_A"/>
    <property type="match status" value="1"/>
</dbReference>
<dbReference type="PRINTS" id="PR00123">
    <property type="entry name" value="ATPASEA"/>
</dbReference>
<dbReference type="SUPFAM" id="SSF81336">
    <property type="entry name" value="F1F0 ATP synthase subunit A"/>
    <property type="match status" value="1"/>
</dbReference>
<reference key="1">
    <citation type="journal article" date="2006" name="Proc. Natl. Acad. Sci. U.S.A.">
        <title>Comparative genomics of the lactic acid bacteria.</title>
        <authorList>
            <person name="Makarova K.S."/>
            <person name="Slesarev A."/>
            <person name="Wolf Y.I."/>
            <person name="Sorokin A."/>
            <person name="Mirkin B."/>
            <person name="Koonin E.V."/>
            <person name="Pavlov A."/>
            <person name="Pavlova N."/>
            <person name="Karamychev V."/>
            <person name="Polouchine N."/>
            <person name="Shakhova V."/>
            <person name="Grigoriev I."/>
            <person name="Lou Y."/>
            <person name="Rohksar D."/>
            <person name="Lucas S."/>
            <person name="Huang K."/>
            <person name="Goodstein D.M."/>
            <person name="Hawkins T."/>
            <person name="Plengvidhya V."/>
            <person name="Welker D."/>
            <person name="Hughes J."/>
            <person name="Goh Y."/>
            <person name="Benson A."/>
            <person name="Baldwin K."/>
            <person name="Lee J.-H."/>
            <person name="Diaz-Muniz I."/>
            <person name="Dosti B."/>
            <person name="Smeianov V."/>
            <person name="Wechter W."/>
            <person name="Barabote R."/>
            <person name="Lorca G."/>
            <person name="Altermann E."/>
            <person name="Barrangou R."/>
            <person name="Ganesan B."/>
            <person name="Xie Y."/>
            <person name="Rawsthorne H."/>
            <person name="Tamir D."/>
            <person name="Parker C."/>
            <person name="Breidt F."/>
            <person name="Broadbent J.R."/>
            <person name="Hutkins R."/>
            <person name="O'Sullivan D."/>
            <person name="Steele J."/>
            <person name="Unlu G."/>
            <person name="Saier M.H. Jr."/>
            <person name="Klaenhammer T."/>
            <person name="Richardson P."/>
            <person name="Kozyavkin S."/>
            <person name="Weimer B.C."/>
            <person name="Mills D.A."/>
        </authorList>
    </citation>
    <scope>NUCLEOTIDE SEQUENCE [LARGE SCALE GENOMIC DNA]</scope>
    <source>
        <strain>ATCC 25745 / CCUG 21536 / LMG 10740 / 183-1w</strain>
    </source>
</reference>
<evidence type="ECO:0000255" key="1">
    <source>
        <dbReference type="HAMAP-Rule" id="MF_01393"/>
    </source>
</evidence>
<feature type="chain" id="PRO_1000145298" description="ATP synthase subunit a">
    <location>
        <begin position="1"/>
        <end position="238"/>
    </location>
</feature>
<feature type="transmembrane region" description="Helical" evidence="1">
    <location>
        <begin position="18"/>
        <end position="38"/>
    </location>
</feature>
<feature type="transmembrane region" description="Helical" evidence="1">
    <location>
        <begin position="76"/>
        <end position="96"/>
    </location>
</feature>
<feature type="transmembrane region" description="Helical" evidence="1">
    <location>
        <begin position="114"/>
        <end position="134"/>
    </location>
</feature>
<feature type="transmembrane region" description="Helical" evidence="1">
    <location>
        <begin position="150"/>
        <end position="170"/>
    </location>
</feature>
<feature type="transmembrane region" description="Helical" evidence="1">
    <location>
        <begin position="188"/>
        <end position="208"/>
    </location>
</feature>
<feature type="transmembrane region" description="Helical" evidence="1">
    <location>
        <begin position="211"/>
        <end position="231"/>
    </location>
</feature>
<protein>
    <recommendedName>
        <fullName evidence="1">ATP synthase subunit a</fullName>
    </recommendedName>
    <alternativeName>
        <fullName evidence="1">ATP synthase F0 sector subunit a</fullName>
    </alternativeName>
    <alternativeName>
        <fullName evidence="1">F-ATPase subunit 6</fullName>
    </alternativeName>
</protein>
<sequence length="238" mass="26603">MSGESISTFQFLGLTFNTTNLISGLVSALIVFCVVFALSRNLKLKPTGKQNILEWIVDFTNGILRDSVDEEEEKNFGLYAFTLFLFIFVSNQIGLFLQIAWNDVSYLRSPTADPIVTLTLSLITMMLAHYSGVAKFGFKKYFEKTYLSPFKVWLPIGVFTEFIDFLTLGLRIYGVIFAGEMLLKMIGGIAFSGGIVNMIVAIPLALIWQGFSVFLGSIQAFVFVTLTSVYISHKVEDE</sequence>
<accession>Q03EK8</accession>
<name>ATP6_PEDPA</name>
<comment type="function">
    <text evidence="1">Key component of the proton channel; it plays a direct role in the translocation of protons across the membrane.</text>
</comment>
<comment type="subunit">
    <text evidence="1">F-type ATPases have 2 components, CF(1) - the catalytic core - and CF(0) - the membrane proton channel. CF(1) has five subunits: alpha(3), beta(3), gamma(1), delta(1), epsilon(1). CF(0) has three main subunits: a(1), b(2) and c(9-12). The alpha and beta chains form an alternating ring which encloses part of the gamma chain. CF(1) is attached to CF(0) by a central stalk formed by the gamma and epsilon chains, while a peripheral stalk is formed by the delta and b chains.</text>
</comment>
<comment type="subcellular location">
    <subcellularLocation>
        <location evidence="1">Cell membrane</location>
        <topology evidence="1">Multi-pass membrane protein</topology>
    </subcellularLocation>
</comment>
<comment type="similarity">
    <text evidence="1">Belongs to the ATPase A chain family.</text>
</comment>
<organism>
    <name type="scientific">Pediococcus pentosaceus (strain ATCC 25745 / CCUG 21536 / LMG 10740 / 183-1w)</name>
    <dbReference type="NCBI Taxonomy" id="278197"/>
    <lineage>
        <taxon>Bacteria</taxon>
        <taxon>Bacillati</taxon>
        <taxon>Bacillota</taxon>
        <taxon>Bacilli</taxon>
        <taxon>Lactobacillales</taxon>
        <taxon>Lactobacillaceae</taxon>
        <taxon>Pediococcus</taxon>
    </lineage>
</organism>
<gene>
    <name evidence="1" type="primary">atpB</name>
    <name type="ordered locus">PEPE_1323</name>
</gene>